<gene>
    <name type="ORF">DDB_G0275853</name>
</gene>
<comment type="function">
    <text evidence="1">O-mannosyl-transferase that transfers mannosyl residues to the hydroxyl group of serine or threonine residues of proteins.</text>
</comment>
<comment type="catalytic activity">
    <reaction evidence="1">
        <text>a di-trans,poly-cis-dolichyl beta-D-mannosyl phosphate + L-seryl-[protein] = 3-O-(alpha-D-mannosyl)-L-seryl-[protein] + a di-trans,poly-cis-dolichyl phosphate + H(+)</text>
        <dbReference type="Rhea" id="RHEA:17377"/>
        <dbReference type="Rhea" id="RHEA-COMP:9863"/>
        <dbReference type="Rhea" id="RHEA-COMP:13546"/>
        <dbReference type="Rhea" id="RHEA-COMP:19498"/>
        <dbReference type="Rhea" id="RHEA-COMP:19501"/>
        <dbReference type="ChEBI" id="CHEBI:15378"/>
        <dbReference type="ChEBI" id="CHEBI:29999"/>
        <dbReference type="ChEBI" id="CHEBI:57683"/>
        <dbReference type="ChEBI" id="CHEBI:58211"/>
        <dbReference type="ChEBI" id="CHEBI:137321"/>
        <dbReference type="EC" id="2.4.1.109"/>
    </reaction>
    <physiologicalReaction direction="left-to-right" evidence="1">
        <dbReference type="Rhea" id="RHEA:17378"/>
    </physiologicalReaction>
</comment>
<comment type="catalytic activity">
    <reaction evidence="1">
        <text>a di-trans,poly-cis-dolichyl beta-D-mannosyl phosphate + L-threonyl-[protein] = 3-O-(alpha-D-mannosyl)-L-threonyl-[protein] + a di-trans,poly-cis-dolichyl phosphate + H(+)</text>
        <dbReference type="Rhea" id="RHEA:53396"/>
        <dbReference type="Rhea" id="RHEA-COMP:11060"/>
        <dbReference type="Rhea" id="RHEA-COMP:13547"/>
        <dbReference type="Rhea" id="RHEA-COMP:19498"/>
        <dbReference type="Rhea" id="RHEA-COMP:19501"/>
        <dbReference type="ChEBI" id="CHEBI:15378"/>
        <dbReference type="ChEBI" id="CHEBI:30013"/>
        <dbReference type="ChEBI" id="CHEBI:57683"/>
        <dbReference type="ChEBI" id="CHEBI:58211"/>
        <dbReference type="ChEBI" id="CHEBI:137323"/>
        <dbReference type="EC" id="2.4.1.109"/>
    </reaction>
    <physiologicalReaction direction="left-to-right" evidence="1">
        <dbReference type="Rhea" id="RHEA:53397"/>
    </physiologicalReaction>
</comment>
<comment type="subcellular location">
    <subcellularLocation>
        <location evidence="1">Endoplasmic reticulum membrane</location>
        <topology evidence="2">Multi-pass membrane protein</topology>
    </subcellularLocation>
</comment>
<comment type="similarity">
    <text evidence="4">Belongs to the glycosyltransferase 117 (GT117) family.</text>
</comment>
<name>TM260_DICDI</name>
<dbReference type="EC" id="2.4.1.109" evidence="1"/>
<dbReference type="EMBL" id="AAFI02000013">
    <property type="protein sequence ID" value="EAL69677.1"/>
    <property type="molecule type" value="Genomic_DNA"/>
</dbReference>
<dbReference type="RefSeq" id="XP_643478.1">
    <property type="nucleotide sequence ID" value="XM_638386.1"/>
</dbReference>
<dbReference type="FunCoup" id="Q8MXQ3">
    <property type="interactions" value="11"/>
</dbReference>
<dbReference type="GlyGen" id="Q8MXQ3">
    <property type="glycosylation" value="8 sites"/>
</dbReference>
<dbReference type="PaxDb" id="44689-DDB0233071"/>
<dbReference type="EnsemblProtists" id="EAL69677">
    <property type="protein sequence ID" value="EAL69677"/>
    <property type="gene ID" value="DDB_G0275853"/>
</dbReference>
<dbReference type="GeneID" id="8620059"/>
<dbReference type="KEGG" id="ddi:DDB_G0275853"/>
<dbReference type="dictyBase" id="DDB_G0275853"/>
<dbReference type="VEuPathDB" id="AmoebaDB:DDB_G0275853"/>
<dbReference type="eggNOG" id="ENOG502QSIA">
    <property type="taxonomic scope" value="Eukaryota"/>
</dbReference>
<dbReference type="HOGENOM" id="CLU_019631_1_0_1"/>
<dbReference type="InParanoid" id="Q8MXQ3"/>
<dbReference type="OMA" id="HSVNLMC"/>
<dbReference type="PhylomeDB" id="Q8MXQ3"/>
<dbReference type="PRO" id="PR:Q8MXQ3"/>
<dbReference type="Proteomes" id="UP000002195">
    <property type="component" value="Chromosome 2"/>
</dbReference>
<dbReference type="GO" id="GO:0005789">
    <property type="term" value="C:endoplasmic reticulum membrane"/>
    <property type="evidence" value="ECO:0000250"/>
    <property type="project" value="UniProtKB"/>
</dbReference>
<dbReference type="GO" id="GO:0004169">
    <property type="term" value="F:dolichyl-phosphate-mannose-protein mannosyltransferase activity"/>
    <property type="evidence" value="ECO:0000250"/>
    <property type="project" value="UniProtKB"/>
</dbReference>
<dbReference type="GO" id="GO:0051604">
    <property type="term" value="P:protein maturation"/>
    <property type="evidence" value="ECO:0000250"/>
    <property type="project" value="UniProtKB"/>
</dbReference>
<dbReference type="InterPro" id="IPR052724">
    <property type="entry name" value="GT117_domain-containing"/>
</dbReference>
<dbReference type="InterPro" id="IPR021280">
    <property type="entry name" value="TMEM260-like"/>
</dbReference>
<dbReference type="PANTHER" id="PTHR16214">
    <property type="entry name" value="TRANSMEMBRANE PROTEIN 260"/>
    <property type="match status" value="1"/>
</dbReference>
<dbReference type="PANTHER" id="PTHR16214:SF3">
    <property type="entry name" value="TRANSMEMBRANE PROTEIN 260"/>
    <property type="match status" value="1"/>
</dbReference>
<dbReference type="Pfam" id="PF11028">
    <property type="entry name" value="TMEM260-like"/>
    <property type="match status" value="1"/>
</dbReference>
<organism>
    <name type="scientific">Dictyostelium discoideum</name>
    <name type="common">Social amoeba</name>
    <dbReference type="NCBI Taxonomy" id="44689"/>
    <lineage>
        <taxon>Eukaryota</taxon>
        <taxon>Amoebozoa</taxon>
        <taxon>Evosea</taxon>
        <taxon>Eumycetozoa</taxon>
        <taxon>Dictyostelia</taxon>
        <taxon>Dictyosteliales</taxon>
        <taxon>Dictyosteliaceae</taxon>
        <taxon>Dictyostelium</taxon>
    </lineage>
</organism>
<proteinExistence type="inferred from homology"/>
<protein>
    <recommendedName>
        <fullName evidence="4">Protein O-mannosyl-transferase tmem260</fullName>
        <ecNumber evidence="1">2.4.1.109</ecNumber>
    </recommendedName>
    <alternativeName>
        <fullName evidence="4">Transmembrane protein 260 homolog</fullName>
    </alternativeName>
</protein>
<sequence>MNNSPTLSNTRNRKNNNNNSNSNSNSNNNNNNNNNNNNNSNNNNNNNNNVNRNVNNRNNNNNNIINVNNNVSSTTMNMAKDFMNWNDGIIEREDTQLQQQKDRCFKILKKSTIACIVLLFISCTIIYSMTQYPSVSGGDAGELIVVAHQFGVAHPPGYPLFTFLGYIFSHIIPSNTLSVAWKISFMSSMIGSIASIFIYLTVYLWVNNHWCGLLSAYMFTFSPLIWMYQIQGEVFSMNNMFVAMLMFLGVWYTRVRIFENERYNTAFWTSERIAYLSAFSCAIGLTNQHTLVLIVIPFAFWLMFISGRDQLWNIKILSNLVFYTLIGLSPYLLLFITPKLNRVKYSWGNTSTLRGFIKHFLREEYGTLQLYGGDGGVISLFTKISIYIENLIIQFGYIGLALSLIGLLNLLLGYNIRTFKWKSFGTMIIFSFLFYITFFFNLCNLPIDKPLYRGVFLRFFMQPNVIISITMGLGIKSIFGFLNRIQRDGGTAATTTTTISKIQKYLLPIIIILLVGNQIGFNYNLQDQSDNYSFYDYGHSVLDGLPRNTLLLVGGDLVTNVPMYLHLCEKVRPDIDILSMEIMSWEWFKITQSPLFQRVKFPGNVYHPYIPDGYSLKDFLDANINDRPIYIGGDFKSGDSSFQNDYYTISKGLTSQIIPKKDSHKFNTFKIIKTTFSTFPSFHIPNNTEKYPNDSWEHFMMEEMAVSLERAAETLLKEYLSQQNTESFKALELSVEILEKALTYVNDKCWSLKHLGICFDHLRYRVVQNVNNNNQQAQNKASNYSKQLLYFWKKYINQCTHEENTDQDWETIKKVIQLI</sequence>
<accession>Q8MXQ3</accession>
<accession>Q553D9</accession>
<keyword id="KW-0256">Endoplasmic reticulum</keyword>
<keyword id="KW-0325">Glycoprotein</keyword>
<keyword id="KW-0328">Glycosyltransferase</keyword>
<keyword id="KW-0472">Membrane</keyword>
<keyword id="KW-1185">Reference proteome</keyword>
<keyword id="KW-0808">Transferase</keyword>
<keyword id="KW-0812">Transmembrane</keyword>
<keyword id="KW-1133">Transmembrane helix</keyword>
<reference key="1">
    <citation type="journal article" date="2002" name="Nature">
        <title>Sequence and analysis of chromosome 2 of Dictyostelium discoideum.</title>
        <authorList>
            <person name="Gloeckner G."/>
            <person name="Eichinger L."/>
            <person name="Szafranski K."/>
            <person name="Pachebat J.A."/>
            <person name="Bankier A.T."/>
            <person name="Dear P.H."/>
            <person name="Lehmann R."/>
            <person name="Baumgart C."/>
            <person name="Parra G."/>
            <person name="Abril J.F."/>
            <person name="Guigo R."/>
            <person name="Kumpf K."/>
            <person name="Tunggal B."/>
            <person name="Cox E.C."/>
            <person name="Quail M.A."/>
            <person name="Platzer M."/>
            <person name="Rosenthal A."/>
            <person name="Noegel A.A."/>
        </authorList>
    </citation>
    <scope>NUCLEOTIDE SEQUENCE [LARGE SCALE GENOMIC DNA]</scope>
    <source>
        <strain>AX4</strain>
    </source>
</reference>
<reference key="2">
    <citation type="journal article" date="2005" name="Nature">
        <title>The genome of the social amoeba Dictyostelium discoideum.</title>
        <authorList>
            <person name="Eichinger L."/>
            <person name="Pachebat J.A."/>
            <person name="Gloeckner G."/>
            <person name="Rajandream M.A."/>
            <person name="Sucgang R."/>
            <person name="Berriman M."/>
            <person name="Song J."/>
            <person name="Olsen R."/>
            <person name="Szafranski K."/>
            <person name="Xu Q."/>
            <person name="Tunggal B."/>
            <person name="Kummerfeld S."/>
            <person name="Madera M."/>
            <person name="Konfortov B.A."/>
            <person name="Rivero F."/>
            <person name="Bankier A.T."/>
            <person name="Lehmann R."/>
            <person name="Hamlin N."/>
            <person name="Davies R."/>
            <person name="Gaudet P."/>
            <person name="Fey P."/>
            <person name="Pilcher K."/>
            <person name="Chen G."/>
            <person name="Saunders D."/>
            <person name="Sodergren E.J."/>
            <person name="Davis P."/>
            <person name="Kerhornou A."/>
            <person name="Nie X."/>
            <person name="Hall N."/>
            <person name="Anjard C."/>
            <person name="Hemphill L."/>
            <person name="Bason N."/>
            <person name="Farbrother P."/>
            <person name="Desany B."/>
            <person name="Just E."/>
            <person name="Morio T."/>
            <person name="Rost R."/>
            <person name="Churcher C.M."/>
            <person name="Cooper J."/>
            <person name="Haydock S."/>
            <person name="van Driessche N."/>
            <person name="Cronin A."/>
            <person name="Goodhead I."/>
            <person name="Muzny D.M."/>
            <person name="Mourier T."/>
            <person name="Pain A."/>
            <person name="Lu M."/>
            <person name="Harper D."/>
            <person name="Lindsay R."/>
            <person name="Hauser H."/>
            <person name="James K.D."/>
            <person name="Quiles M."/>
            <person name="Madan Babu M."/>
            <person name="Saito T."/>
            <person name="Buchrieser C."/>
            <person name="Wardroper A."/>
            <person name="Felder M."/>
            <person name="Thangavelu M."/>
            <person name="Johnson D."/>
            <person name="Knights A."/>
            <person name="Loulseged H."/>
            <person name="Mungall K.L."/>
            <person name="Oliver K."/>
            <person name="Price C."/>
            <person name="Quail M.A."/>
            <person name="Urushihara H."/>
            <person name="Hernandez J."/>
            <person name="Rabbinowitsch E."/>
            <person name="Steffen D."/>
            <person name="Sanders M."/>
            <person name="Ma J."/>
            <person name="Kohara Y."/>
            <person name="Sharp S."/>
            <person name="Simmonds M.N."/>
            <person name="Spiegler S."/>
            <person name="Tivey A."/>
            <person name="Sugano S."/>
            <person name="White B."/>
            <person name="Walker D."/>
            <person name="Woodward J.R."/>
            <person name="Winckler T."/>
            <person name="Tanaka Y."/>
            <person name="Shaulsky G."/>
            <person name="Schleicher M."/>
            <person name="Weinstock G.M."/>
            <person name="Rosenthal A."/>
            <person name="Cox E.C."/>
            <person name="Chisholm R.L."/>
            <person name="Gibbs R.A."/>
            <person name="Loomis W.F."/>
            <person name="Platzer M."/>
            <person name="Kay R.R."/>
            <person name="Williams J.G."/>
            <person name="Dear P.H."/>
            <person name="Noegel A.A."/>
            <person name="Barrell B.G."/>
            <person name="Kuspa A."/>
        </authorList>
    </citation>
    <scope>NUCLEOTIDE SEQUENCE [LARGE SCALE GENOMIC DNA]</scope>
    <source>
        <strain>AX4</strain>
    </source>
</reference>
<feature type="chain" id="PRO_0000356837" description="Protein O-mannosyl-transferase tmem260">
    <location>
        <begin position="1"/>
        <end position="819"/>
    </location>
</feature>
<feature type="transmembrane region" description="Helical" evidence="2">
    <location>
        <begin position="113"/>
        <end position="133"/>
    </location>
</feature>
<feature type="transmembrane region" description="Helical" evidence="2">
    <location>
        <begin position="152"/>
        <end position="172"/>
    </location>
</feature>
<feature type="transmembrane region" description="Helical" evidence="2">
    <location>
        <begin position="185"/>
        <end position="205"/>
    </location>
</feature>
<feature type="transmembrane region" description="Helical" evidence="2">
    <location>
        <begin position="210"/>
        <end position="230"/>
    </location>
</feature>
<feature type="transmembrane region" description="Helical" evidence="2">
    <location>
        <begin position="232"/>
        <end position="252"/>
    </location>
</feature>
<feature type="transmembrane region" description="Helical" evidence="2">
    <location>
        <begin position="285"/>
        <end position="305"/>
    </location>
</feature>
<feature type="transmembrane region" description="Helical" evidence="2">
    <location>
        <begin position="316"/>
        <end position="336"/>
    </location>
</feature>
<feature type="transmembrane region" description="Helical" evidence="2">
    <location>
        <begin position="391"/>
        <end position="411"/>
    </location>
</feature>
<feature type="transmembrane region" description="Helical" evidence="2">
    <location>
        <begin position="427"/>
        <end position="447"/>
    </location>
</feature>
<feature type="transmembrane region" description="Helical" evidence="2">
    <location>
        <begin position="459"/>
        <end position="479"/>
    </location>
</feature>
<feature type="transmembrane region" description="Helical" evidence="2">
    <location>
        <begin position="505"/>
        <end position="525"/>
    </location>
</feature>
<feature type="region of interest" description="Disordered" evidence="3">
    <location>
        <begin position="1"/>
        <end position="68"/>
    </location>
</feature>
<feature type="compositionally biased region" description="Polar residues" evidence="3">
    <location>
        <begin position="1"/>
        <end position="10"/>
    </location>
</feature>
<feature type="compositionally biased region" description="Low complexity" evidence="3">
    <location>
        <begin position="15"/>
        <end position="68"/>
    </location>
</feature>
<feature type="glycosylation site" description="N-linked (GlcNAc...) asparagine" evidence="2">
    <location>
        <position position="18"/>
    </location>
</feature>
<feature type="glycosylation site" description="N-linked (GlcNAc...) asparagine" evidence="2">
    <location>
        <position position="38"/>
    </location>
</feature>
<feature type="glycosylation site" description="N-linked (GlcNAc...) asparagine" evidence="2">
    <location>
        <position position="70"/>
    </location>
</feature>
<feature type="glycosylation site" description="N-linked (GlcNAc...) asparagine" evidence="2">
    <location>
        <position position="349"/>
    </location>
</feature>
<feature type="glycosylation site" description="N-linked (GlcNAc...) asparagine" evidence="2">
    <location>
        <position position="531"/>
    </location>
</feature>
<feature type="glycosylation site" description="N-linked (GlcNAc...) asparagine" evidence="2">
    <location>
        <position position="686"/>
    </location>
</feature>
<feature type="glycosylation site" description="N-linked (GlcNAc...) asparagine" evidence="2">
    <location>
        <position position="693"/>
    </location>
</feature>
<feature type="glycosylation site" description="N-linked (GlcNAc...) asparagine" evidence="2">
    <location>
        <position position="783"/>
    </location>
</feature>
<evidence type="ECO:0000250" key="1">
    <source>
        <dbReference type="UniProtKB" id="Q9NX78"/>
    </source>
</evidence>
<evidence type="ECO:0000255" key="2"/>
<evidence type="ECO:0000256" key="3">
    <source>
        <dbReference type="SAM" id="MobiDB-lite"/>
    </source>
</evidence>
<evidence type="ECO:0000305" key="4"/>